<evidence type="ECO:0000255" key="1">
    <source>
        <dbReference type="HAMAP-Rule" id="MF_01508"/>
    </source>
</evidence>
<protein>
    <recommendedName>
        <fullName evidence="1">Replication factor C large subunit</fullName>
        <shortName evidence="1">RFC large subunit</shortName>
    </recommendedName>
    <alternativeName>
        <fullName evidence="1">Clamp loader large subunit</fullName>
    </alternativeName>
</protein>
<proteinExistence type="inferred from homology"/>
<organism>
    <name type="scientific">Sulfurisphaera tokodaii (strain DSM 16993 / JCM 10545 / NBRC 100140 / 7)</name>
    <name type="common">Sulfolobus tokodaii</name>
    <dbReference type="NCBI Taxonomy" id="273063"/>
    <lineage>
        <taxon>Archaea</taxon>
        <taxon>Thermoproteota</taxon>
        <taxon>Thermoprotei</taxon>
        <taxon>Sulfolobales</taxon>
        <taxon>Sulfolobaceae</taxon>
        <taxon>Sulfurisphaera</taxon>
    </lineage>
</organism>
<accession>Q975D4</accession>
<accession>F9VMZ9</accession>
<sequence>MPLQWFLKYRPKTLNEVENEEDAKKELVEWIESWLKGKPNYKAVLLYGPPGVGKTTLAEALARDYKLELFEMNASDSRNLNDIRTMAERASITGTIFGIKGKLILLDEVDGLNARADAGAIDAILELINKTKYPIILTANDPWDPSLRPLRNAVKMIELKRLTKYPLKRILKKICEAEKITCEDEALDFIIEQSEGDARYAINMLQGVAEGYGRVTLDMAKNLVRRKDRELDPFEALRGVFWAKYYWQAKSAVTDTQIDYELLMRWLDENIPLQYDNLEDVWRAYDALSRASLFLTRSKLVGWDLLSYTFDLMGPGIAFASLEKKKPTYKAKWVKYQFPQYIQQLAKTKEIRDALDTLLRKIGQAIHASKDKTLNDFLPAFIIYYRKYQEKLDKELELTEKEKDVIKLISSFYEGSKVEIEEPEKKEPSKRRTTSYRRKS</sequence>
<dbReference type="EMBL" id="BA000023">
    <property type="protein sequence ID" value="BAK54296.1"/>
    <property type="molecule type" value="Genomic_DNA"/>
</dbReference>
<dbReference type="RefSeq" id="WP_052846342.1">
    <property type="nucleotide sequence ID" value="NC_003106.2"/>
</dbReference>
<dbReference type="SMR" id="Q975D4"/>
<dbReference type="STRING" id="273063.STK_04730"/>
<dbReference type="GeneID" id="1458416"/>
<dbReference type="KEGG" id="sto:STK_04730"/>
<dbReference type="PATRIC" id="fig|273063.9.peg.548"/>
<dbReference type="eggNOG" id="arCOG00470">
    <property type="taxonomic scope" value="Archaea"/>
</dbReference>
<dbReference type="OrthoDB" id="8658at2157"/>
<dbReference type="Proteomes" id="UP000001015">
    <property type="component" value="Chromosome"/>
</dbReference>
<dbReference type="GO" id="GO:0005524">
    <property type="term" value="F:ATP binding"/>
    <property type="evidence" value="ECO:0007669"/>
    <property type="project" value="UniProtKB-UniRule"/>
</dbReference>
<dbReference type="GO" id="GO:0016887">
    <property type="term" value="F:ATP hydrolysis activity"/>
    <property type="evidence" value="ECO:0007669"/>
    <property type="project" value="InterPro"/>
</dbReference>
<dbReference type="GO" id="GO:0003689">
    <property type="term" value="F:DNA clamp loader activity"/>
    <property type="evidence" value="ECO:0007669"/>
    <property type="project" value="UniProtKB-UniRule"/>
</dbReference>
<dbReference type="GO" id="GO:0006260">
    <property type="term" value="P:DNA replication"/>
    <property type="evidence" value="ECO:0007669"/>
    <property type="project" value="UniProtKB-UniRule"/>
</dbReference>
<dbReference type="CDD" id="cd00009">
    <property type="entry name" value="AAA"/>
    <property type="match status" value="1"/>
</dbReference>
<dbReference type="CDD" id="cd18140">
    <property type="entry name" value="HLD_clamp_RFC"/>
    <property type="match status" value="1"/>
</dbReference>
<dbReference type="Gene3D" id="1.10.8.60">
    <property type="match status" value="1"/>
</dbReference>
<dbReference type="Gene3D" id="3.40.50.300">
    <property type="entry name" value="P-loop containing nucleotide triphosphate hydrolases"/>
    <property type="match status" value="1"/>
</dbReference>
<dbReference type="HAMAP" id="MF_01508">
    <property type="entry name" value="RfcL"/>
    <property type="match status" value="1"/>
</dbReference>
<dbReference type="InterPro" id="IPR003593">
    <property type="entry name" value="AAA+_ATPase"/>
</dbReference>
<dbReference type="InterPro" id="IPR003959">
    <property type="entry name" value="ATPase_AAA_core"/>
</dbReference>
<dbReference type="InterPro" id="IPR027417">
    <property type="entry name" value="P-loop_NTPase"/>
</dbReference>
<dbReference type="InterPro" id="IPR023935">
    <property type="entry name" value="Rep_factor-C_lsu"/>
</dbReference>
<dbReference type="InterPro" id="IPR047854">
    <property type="entry name" value="RFC_lid"/>
</dbReference>
<dbReference type="NCBIfam" id="NF003226">
    <property type="entry name" value="PRK04195.1-1"/>
    <property type="match status" value="1"/>
</dbReference>
<dbReference type="NCBIfam" id="NF003229">
    <property type="entry name" value="PRK04195.1-5"/>
    <property type="match status" value="1"/>
</dbReference>
<dbReference type="PANTHER" id="PTHR23389">
    <property type="entry name" value="CHROMOSOME TRANSMISSION FIDELITY FACTOR 18"/>
    <property type="match status" value="1"/>
</dbReference>
<dbReference type="PANTHER" id="PTHR23389:SF6">
    <property type="entry name" value="REPLICATION FACTOR C SUBUNIT 1"/>
    <property type="match status" value="1"/>
</dbReference>
<dbReference type="Pfam" id="PF00004">
    <property type="entry name" value="AAA"/>
    <property type="match status" value="1"/>
</dbReference>
<dbReference type="Pfam" id="PF21960">
    <property type="entry name" value="RCF1-5-like_lid"/>
    <property type="match status" value="1"/>
</dbReference>
<dbReference type="SMART" id="SM00382">
    <property type="entry name" value="AAA"/>
    <property type="match status" value="1"/>
</dbReference>
<dbReference type="SUPFAM" id="SSF52540">
    <property type="entry name" value="P-loop containing nucleoside triphosphate hydrolases"/>
    <property type="match status" value="1"/>
</dbReference>
<keyword id="KW-0067">ATP-binding</keyword>
<keyword id="KW-0235">DNA replication</keyword>
<keyword id="KW-0547">Nucleotide-binding</keyword>
<keyword id="KW-1185">Reference proteome</keyword>
<reference key="1">
    <citation type="journal article" date="2001" name="DNA Res.">
        <title>Complete genome sequence of an aerobic thermoacidophilic Crenarchaeon, Sulfolobus tokodaii strain7.</title>
        <authorList>
            <person name="Kawarabayasi Y."/>
            <person name="Hino Y."/>
            <person name="Horikawa H."/>
            <person name="Jin-no K."/>
            <person name="Takahashi M."/>
            <person name="Sekine M."/>
            <person name="Baba S."/>
            <person name="Ankai A."/>
            <person name="Kosugi H."/>
            <person name="Hosoyama A."/>
            <person name="Fukui S."/>
            <person name="Nagai Y."/>
            <person name="Nishijima K."/>
            <person name="Otsuka R."/>
            <person name="Nakazawa H."/>
            <person name="Takamiya M."/>
            <person name="Kato Y."/>
            <person name="Yoshizawa T."/>
            <person name="Tanaka T."/>
            <person name="Kudoh Y."/>
            <person name="Yamazaki J."/>
            <person name="Kushida N."/>
            <person name="Oguchi A."/>
            <person name="Aoki K."/>
            <person name="Masuda S."/>
            <person name="Yanagii M."/>
            <person name="Nishimura M."/>
            <person name="Yamagishi A."/>
            <person name="Oshima T."/>
            <person name="Kikuchi H."/>
        </authorList>
    </citation>
    <scope>NUCLEOTIDE SEQUENCE [LARGE SCALE GENOMIC DNA]</scope>
    <source>
        <strain>DSM 16993 / JCM 10545 / NBRC 100140 / 7</strain>
    </source>
</reference>
<gene>
    <name evidence="1" type="primary">rfcL</name>
    <name type="ordered locus">STK_04730</name>
</gene>
<name>RFCL_SULTO</name>
<feature type="chain" id="PRO_0000135967" description="Replication factor C large subunit">
    <location>
        <begin position="1"/>
        <end position="440"/>
    </location>
</feature>
<feature type="binding site" evidence="1">
    <location>
        <begin position="48"/>
        <end position="55"/>
    </location>
    <ligand>
        <name>ATP</name>
        <dbReference type="ChEBI" id="CHEBI:30616"/>
    </ligand>
</feature>
<comment type="function">
    <text evidence="1">Part of the RFC clamp loader complex which loads the PCNA sliding clamp onto DNA.</text>
</comment>
<comment type="subunit">
    <text evidence="1">Heteromultimer composed of small subunits (RfcS) and large subunits (RfcL).</text>
</comment>
<comment type="similarity">
    <text evidence="1">Belongs to the activator 1 small subunits family. RfcL subfamily.</text>
</comment>